<comment type="function">
    <text evidence="1">Catalyzes the hydrolysis of glutamine to glutamate and ammonia as part of the biosynthesis of pyridoxal 5'-phosphate. The resulting ammonia molecule is channeled to the active site of PdxS.</text>
</comment>
<comment type="catalytic activity">
    <reaction evidence="1">
        <text>aldehydo-D-ribose 5-phosphate + D-glyceraldehyde 3-phosphate + L-glutamine = pyridoxal 5'-phosphate + L-glutamate + phosphate + 3 H2O + H(+)</text>
        <dbReference type="Rhea" id="RHEA:31507"/>
        <dbReference type="ChEBI" id="CHEBI:15377"/>
        <dbReference type="ChEBI" id="CHEBI:15378"/>
        <dbReference type="ChEBI" id="CHEBI:29985"/>
        <dbReference type="ChEBI" id="CHEBI:43474"/>
        <dbReference type="ChEBI" id="CHEBI:58273"/>
        <dbReference type="ChEBI" id="CHEBI:58359"/>
        <dbReference type="ChEBI" id="CHEBI:59776"/>
        <dbReference type="ChEBI" id="CHEBI:597326"/>
        <dbReference type="EC" id="4.3.3.6"/>
    </reaction>
</comment>
<comment type="catalytic activity">
    <reaction evidence="1">
        <text>L-glutamine + H2O = L-glutamate + NH4(+)</text>
        <dbReference type="Rhea" id="RHEA:15889"/>
        <dbReference type="ChEBI" id="CHEBI:15377"/>
        <dbReference type="ChEBI" id="CHEBI:28938"/>
        <dbReference type="ChEBI" id="CHEBI:29985"/>
        <dbReference type="ChEBI" id="CHEBI:58359"/>
        <dbReference type="EC" id="3.5.1.2"/>
    </reaction>
</comment>
<comment type="pathway">
    <text evidence="1">Cofactor biosynthesis; pyridoxal 5'-phosphate biosynthesis.</text>
</comment>
<comment type="subunit">
    <text evidence="1">In the presence of PdxS, forms a dodecamer of heterodimers. Only shows activity in the heterodimer.</text>
</comment>
<comment type="similarity">
    <text evidence="1">Belongs to the glutaminase PdxT/SNO family.</text>
</comment>
<name>PDXT_LISIN</name>
<accession>Q929R8</accession>
<dbReference type="EC" id="4.3.3.6" evidence="1"/>
<dbReference type="EC" id="3.5.1.2" evidence="1"/>
<dbReference type="EMBL" id="AL596171">
    <property type="protein sequence ID" value="CAC97435.1"/>
    <property type="molecule type" value="Genomic_DNA"/>
</dbReference>
<dbReference type="PIR" id="AC1708">
    <property type="entry name" value="AC1708"/>
</dbReference>
<dbReference type="RefSeq" id="WP_010991066.1">
    <property type="nucleotide sequence ID" value="NC_003212.1"/>
</dbReference>
<dbReference type="SMR" id="Q929R8"/>
<dbReference type="STRING" id="272626.gene:17566564"/>
<dbReference type="KEGG" id="lin:lin2206"/>
<dbReference type="eggNOG" id="COG0311">
    <property type="taxonomic scope" value="Bacteria"/>
</dbReference>
<dbReference type="HOGENOM" id="CLU_069674_2_0_9"/>
<dbReference type="OrthoDB" id="9810320at2"/>
<dbReference type="UniPathway" id="UPA00245"/>
<dbReference type="Proteomes" id="UP000002513">
    <property type="component" value="Chromosome"/>
</dbReference>
<dbReference type="GO" id="GO:0005829">
    <property type="term" value="C:cytosol"/>
    <property type="evidence" value="ECO:0007669"/>
    <property type="project" value="TreeGrafter"/>
</dbReference>
<dbReference type="GO" id="GO:1903600">
    <property type="term" value="C:glutaminase complex"/>
    <property type="evidence" value="ECO:0007669"/>
    <property type="project" value="TreeGrafter"/>
</dbReference>
<dbReference type="GO" id="GO:0004359">
    <property type="term" value="F:glutaminase activity"/>
    <property type="evidence" value="ECO:0007669"/>
    <property type="project" value="UniProtKB-UniRule"/>
</dbReference>
<dbReference type="GO" id="GO:0036381">
    <property type="term" value="F:pyridoxal 5'-phosphate synthase (glutamine hydrolysing) activity"/>
    <property type="evidence" value="ECO:0007669"/>
    <property type="project" value="UniProtKB-UniRule"/>
</dbReference>
<dbReference type="GO" id="GO:0006543">
    <property type="term" value="P:glutamine catabolic process"/>
    <property type="evidence" value="ECO:0007669"/>
    <property type="project" value="UniProtKB-UniRule"/>
</dbReference>
<dbReference type="GO" id="GO:0042823">
    <property type="term" value="P:pyridoxal phosphate biosynthetic process"/>
    <property type="evidence" value="ECO:0007669"/>
    <property type="project" value="UniProtKB-UniRule"/>
</dbReference>
<dbReference type="GO" id="GO:0008614">
    <property type="term" value="P:pyridoxine metabolic process"/>
    <property type="evidence" value="ECO:0007669"/>
    <property type="project" value="TreeGrafter"/>
</dbReference>
<dbReference type="CDD" id="cd01749">
    <property type="entry name" value="GATase1_PB"/>
    <property type="match status" value="1"/>
</dbReference>
<dbReference type="FunFam" id="3.40.50.880:FF:000010">
    <property type="entry name" value="uncharacterized protein LOC100176842 isoform X2"/>
    <property type="match status" value="1"/>
</dbReference>
<dbReference type="Gene3D" id="3.40.50.880">
    <property type="match status" value="1"/>
</dbReference>
<dbReference type="HAMAP" id="MF_01615">
    <property type="entry name" value="PdxT"/>
    <property type="match status" value="1"/>
</dbReference>
<dbReference type="InterPro" id="IPR029062">
    <property type="entry name" value="Class_I_gatase-like"/>
</dbReference>
<dbReference type="InterPro" id="IPR002161">
    <property type="entry name" value="PdxT/SNO"/>
</dbReference>
<dbReference type="InterPro" id="IPR021196">
    <property type="entry name" value="PdxT/SNO_CS"/>
</dbReference>
<dbReference type="NCBIfam" id="TIGR03800">
    <property type="entry name" value="PLP_synth_Pdx2"/>
    <property type="match status" value="1"/>
</dbReference>
<dbReference type="PANTHER" id="PTHR31559">
    <property type="entry name" value="PYRIDOXAL 5'-PHOSPHATE SYNTHASE SUBUNIT SNO"/>
    <property type="match status" value="1"/>
</dbReference>
<dbReference type="PANTHER" id="PTHR31559:SF0">
    <property type="entry name" value="PYRIDOXAL 5'-PHOSPHATE SYNTHASE SUBUNIT SNO1-RELATED"/>
    <property type="match status" value="1"/>
</dbReference>
<dbReference type="Pfam" id="PF01174">
    <property type="entry name" value="SNO"/>
    <property type="match status" value="1"/>
</dbReference>
<dbReference type="PIRSF" id="PIRSF005639">
    <property type="entry name" value="Glut_amidoT_SNO"/>
    <property type="match status" value="1"/>
</dbReference>
<dbReference type="SUPFAM" id="SSF52317">
    <property type="entry name" value="Class I glutamine amidotransferase-like"/>
    <property type="match status" value="1"/>
</dbReference>
<dbReference type="PROSITE" id="PS01236">
    <property type="entry name" value="PDXT_SNO_1"/>
    <property type="match status" value="1"/>
</dbReference>
<dbReference type="PROSITE" id="PS51130">
    <property type="entry name" value="PDXT_SNO_2"/>
    <property type="match status" value="1"/>
</dbReference>
<reference key="1">
    <citation type="journal article" date="2001" name="Science">
        <title>Comparative genomics of Listeria species.</title>
        <authorList>
            <person name="Glaser P."/>
            <person name="Frangeul L."/>
            <person name="Buchrieser C."/>
            <person name="Rusniok C."/>
            <person name="Amend A."/>
            <person name="Baquero F."/>
            <person name="Berche P."/>
            <person name="Bloecker H."/>
            <person name="Brandt P."/>
            <person name="Chakraborty T."/>
            <person name="Charbit A."/>
            <person name="Chetouani F."/>
            <person name="Couve E."/>
            <person name="de Daruvar A."/>
            <person name="Dehoux P."/>
            <person name="Domann E."/>
            <person name="Dominguez-Bernal G."/>
            <person name="Duchaud E."/>
            <person name="Durant L."/>
            <person name="Dussurget O."/>
            <person name="Entian K.-D."/>
            <person name="Fsihi H."/>
            <person name="Garcia-del Portillo F."/>
            <person name="Garrido P."/>
            <person name="Gautier L."/>
            <person name="Goebel W."/>
            <person name="Gomez-Lopez N."/>
            <person name="Hain T."/>
            <person name="Hauf J."/>
            <person name="Jackson D."/>
            <person name="Jones L.-M."/>
            <person name="Kaerst U."/>
            <person name="Kreft J."/>
            <person name="Kuhn M."/>
            <person name="Kunst F."/>
            <person name="Kurapkat G."/>
            <person name="Madueno E."/>
            <person name="Maitournam A."/>
            <person name="Mata Vicente J."/>
            <person name="Ng E."/>
            <person name="Nedjari H."/>
            <person name="Nordsiek G."/>
            <person name="Novella S."/>
            <person name="de Pablos B."/>
            <person name="Perez-Diaz J.-C."/>
            <person name="Purcell R."/>
            <person name="Remmel B."/>
            <person name="Rose M."/>
            <person name="Schlueter T."/>
            <person name="Simoes N."/>
            <person name="Tierrez A."/>
            <person name="Vazquez-Boland J.-A."/>
            <person name="Voss H."/>
            <person name="Wehland J."/>
            <person name="Cossart P."/>
        </authorList>
    </citation>
    <scope>NUCLEOTIDE SEQUENCE [LARGE SCALE GENOMIC DNA]</scope>
    <source>
        <strain>ATCC BAA-680 / CLIP 11262</strain>
    </source>
</reference>
<sequence length="188" mass="20561">MKKIGVLALQGAVDEHIQMIESAGALAFKVKHSNDLAGLDGLVLPGGESTTMRKIMKRYDLMEPVKAFAKEGKAIFGTCAGLVLLSKEIEGGEESLGLLEATAIRNGFGRQKESFEAELTVEVFDDSPFEAVFIRAPYLIEPSDEVSVLATVENRIVAAKQANILVTAFHPELTNDNRLMKYFLEKMV</sequence>
<organism>
    <name type="scientific">Listeria innocua serovar 6a (strain ATCC BAA-680 / CLIP 11262)</name>
    <dbReference type="NCBI Taxonomy" id="272626"/>
    <lineage>
        <taxon>Bacteria</taxon>
        <taxon>Bacillati</taxon>
        <taxon>Bacillota</taxon>
        <taxon>Bacilli</taxon>
        <taxon>Bacillales</taxon>
        <taxon>Listeriaceae</taxon>
        <taxon>Listeria</taxon>
    </lineage>
</organism>
<gene>
    <name evidence="1" type="primary">pdxT</name>
    <name type="ordered locus">lin2206</name>
</gene>
<proteinExistence type="inferred from homology"/>
<feature type="chain" id="PRO_0000135643" description="Pyridoxal 5'-phosphate synthase subunit PdxT">
    <location>
        <begin position="1"/>
        <end position="188"/>
    </location>
</feature>
<feature type="active site" description="Nucleophile" evidence="1">
    <location>
        <position position="79"/>
    </location>
</feature>
<feature type="active site" description="Charge relay system" evidence="1">
    <location>
        <position position="170"/>
    </location>
</feature>
<feature type="active site" description="Charge relay system" evidence="1">
    <location>
        <position position="172"/>
    </location>
</feature>
<feature type="binding site" evidence="1">
    <location>
        <begin position="47"/>
        <end position="49"/>
    </location>
    <ligand>
        <name>L-glutamine</name>
        <dbReference type="ChEBI" id="CHEBI:58359"/>
    </ligand>
</feature>
<feature type="binding site" evidence="1">
    <location>
        <position position="105"/>
    </location>
    <ligand>
        <name>L-glutamine</name>
        <dbReference type="ChEBI" id="CHEBI:58359"/>
    </ligand>
</feature>
<feature type="binding site" evidence="1">
    <location>
        <begin position="134"/>
        <end position="135"/>
    </location>
    <ligand>
        <name>L-glutamine</name>
        <dbReference type="ChEBI" id="CHEBI:58359"/>
    </ligand>
</feature>
<keyword id="KW-0315">Glutamine amidotransferase</keyword>
<keyword id="KW-0378">Hydrolase</keyword>
<keyword id="KW-0456">Lyase</keyword>
<keyword id="KW-0663">Pyridoxal phosphate</keyword>
<protein>
    <recommendedName>
        <fullName evidence="1">Pyridoxal 5'-phosphate synthase subunit PdxT</fullName>
        <ecNumber evidence="1">4.3.3.6</ecNumber>
    </recommendedName>
    <alternativeName>
        <fullName evidence="1">Pdx2</fullName>
    </alternativeName>
    <alternativeName>
        <fullName evidence="1">Pyridoxal 5'-phosphate synthase glutaminase subunit</fullName>
        <ecNumber evidence="1">3.5.1.2</ecNumber>
    </alternativeName>
</protein>
<evidence type="ECO:0000255" key="1">
    <source>
        <dbReference type="HAMAP-Rule" id="MF_01615"/>
    </source>
</evidence>